<accession>Q54513</accession>
<keyword id="KW-0233">DNA recombination</keyword>
<keyword id="KW-0238">DNA-binding</keyword>
<keyword id="KW-0814">Transposable element</keyword>
<keyword id="KW-0815">Transposition</keyword>
<reference key="1">
    <citation type="journal article" date="1994" name="J. Bacteriol.">
        <title>Isolation, characterization, and nucleotide sequence of IS1202, an insertion sequence of Streptococcus pneumoniae.</title>
        <authorList>
            <person name="Morona J.K."/>
            <person name="Guidolin A."/>
            <person name="Morona R."/>
            <person name="Hansman D."/>
            <person name="Paton J.C."/>
        </authorList>
    </citation>
    <scope>NUCLEOTIDE SEQUENCE [GENOMIC DNA]</scope>
    <source>
        <strain>19F / SSZ</strain>
    </source>
</reference>
<sequence length="465" mass="54423">MNETKKYLVIKAIAQGKKTKKRACVELNLSERQINRPLLAYQQKGKEAFRHGNRNRKPKHAIPDEIKERILKKYLSYETYKPNVLHFCELLAEEEGIKLSDTTVRKILYKKNILSPKSHRKTKKRVRKQAKLNLNQPLDNPILPTAKDFLEDPKKVHPSRPRKKFAGELIQMDASPHAWFGPETTNLHLAIDDASGNILGAYFDKQETLNAYYHVLEQILANHGIPLQMKTDKRTVFTYQASNSKKMEDDSYTQFGYACHQLGILLETTSIPQAKGRVERLNQTLQSRLPIELERNKIHTLEEANTFLLSYIQTFNEQFGNKTKLSVFEEAPNPSERNLILARLAERVVDSGHHIRFQNRCYIPTEQGKEVYFIRKTKALVLKAFDGDIYLNIADKIYHTKELLDHELYSKNFEQEPEQKKERRKYIPPQTHPWKLTSFKQYLHKNKKDYEEFTSEEIHSPQLQV</sequence>
<protein>
    <recommendedName>
        <fullName>Transposase for insertion sequence IS1202</fullName>
    </recommendedName>
</protein>
<feature type="chain" id="PRO_0000075458" description="Transposase for insertion sequence IS1202">
    <location>
        <begin position="1"/>
        <end position="465"/>
    </location>
</feature>
<feature type="domain" description="Integrase catalytic" evidence="1">
    <location>
        <begin position="157"/>
        <end position="340"/>
    </location>
</feature>
<comment type="function">
    <text evidence="2">Required for the transposition of the insertion element.</text>
</comment>
<comment type="miscellaneous">
    <text>Found only in encapsulated strains, not involved in capsule production.</text>
</comment>
<evidence type="ECO:0000255" key="1">
    <source>
        <dbReference type="PROSITE-ProRule" id="PRU00457"/>
    </source>
</evidence>
<evidence type="ECO:0000305" key="2"/>
<dbReference type="EMBL" id="U04047">
    <property type="protein sequence ID" value="AAA21852.1"/>
    <property type="molecule type" value="Genomic_DNA"/>
</dbReference>
<dbReference type="PIR" id="A55518">
    <property type="entry name" value="A55518"/>
</dbReference>
<dbReference type="GO" id="GO:0003677">
    <property type="term" value="F:DNA binding"/>
    <property type="evidence" value="ECO:0007669"/>
    <property type="project" value="UniProtKB-KW"/>
</dbReference>
<dbReference type="GO" id="GO:0015074">
    <property type="term" value="P:DNA integration"/>
    <property type="evidence" value="ECO:0007669"/>
    <property type="project" value="InterPro"/>
</dbReference>
<dbReference type="GO" id="GO:0006310">
    <property type="term" value="P:DNA recombination"/>
    <property type="evidence" value="ECO:0007669"/>
    <property type="project" value="UniProtKB-KW"/>
</dbReference>
<dbReference type="GO" id="GO:0032196">
    <property type="term" value="P:transposition"/>
    <property type="evidence" value="ECO:0007669"/>
    <property type="project" value="UniProtKB-KW"/>
</dbReference>
<dbReference type="Gene3D" id="3.30.420.10">
    <property type="entry name" value="Ribonuclease H-like superfamily/Ribonuclease H"/>
    <property type="match status" value="1"/>
</dbReference>
<dbReference type="InterPro" id="IPR009057">
    <property type="entry name" value="Homeodomain-like_sf"/>
</dbReference>
<dbReference type="InterPro" id="IPR001584">
    <property type="entry name" value="Integrase_cat-core"/>
</dbReference>
<dbReference type="InterPro" id="IPR047797">
    <property type="entry name" value="ISNCY_transpos"/>
</dbReference>
<dbReference type="InterPro" id="IPR012337">
    <property type="entry name" value="RNaseH-like_sf"/>
</dbReference>
<dbReference type="InterPro" id="IPR036397">
    <property type="entry name" value="RNaseH_sf"/>
</dbReference>
<dbReference type="NCBIfam" id="NF033594">
    <property type="entry name" value="transpos_ISNCY_2"/>
    <property type="match status" value="1"/>
</dbReference>
<dbReference type="PANTHER" id="PTHR35004:SF7">
    <property type="entry name" value="INTEGRASE PROTEIN"/>
    <property type="match status" value="1"/>
</dbReference>
<dbReference type="PANTHER" id="PTHR35004">
    <property type="entry name" value="TRANSPOSASE RV3428C-RELATED"/>
    <property type="match status" value="1"/>
</dbReference>
<dbReference type="Pfam" id="PF13551">
    <property type="entry name" value="HTH_29"/>
    <property type="match status" value="1"/>
</dbReference>
<dbReference type="SUPFAM" id="SSF46689">
    <property type="entry name" value="Homeodomain-like"/>
    <property type="match status" value="1"/>
</dbReference>
<dbReference type="SUPFAM" id="SSF53098">
    <property type="entry name" value="Ribonuclease H-like"/>
    <property type="match status" value="1"/>
</dbReference>
<dbReference type="PROSITE" id="PS50994">
    <property type="entry name" value="INTEGRASE"/>
    <property type="match status" value="1"/>
</dbReference>
<name>TRA2_STREE</name>
<organism>
    <name type="scientific">Streptococcus pneumoniae</name>
    <dbReference type="NCBI Taxonomy" id="1313"/>
    <lineage>
        <taxon>Bacteria</taxon>
        <taxon>Bacillati</taxon>
        <taxon>Bacillota</taxon>
        <taxon>Bacilli</taxon>
        <taxon>Lactobacillales</taxon>
        <taxon>Streptococcaceae</taxon>
        <taxon>Streptococcus</taxon>
    </lineage>
</organism>
<proteinExistence type="predicted"/>